<reference key="1">
    <citation type="journal article" date="2002" name="Biochemistry">
        <title>The missing link in the fungal L-arabinose catabolic pathway, identification of the L-xylulose reductase gene.</title>
        <authorList>
            <person name="Richard P."/>
            <person name="Putkonen M."/>
            <person name="Vaeaenaenen R."/>
            <person name="Londesborough J."/>
            <person name="Penttilae M."/>
        </authorList>
    </citation>
    <scope>NUCLEOTIDE SEQUENCE [MRNA]</scope>
    <scope>IDENTIFICATION AS A FUNGAL L-XYLULOSE REDUCTASE</scope>
    <source>
        <strain>ATCC 56765 / BCRC 32924 / NRRL 11460 / Rut C-30</strain>
    </source>
</reference>
<reference key="2">
    <citation type="journal article" date="2013" name="Ind. Biotechnol.">
        <title>Comparative genomics analysis of Trichoderma reesei strains.</title>
        <authorList>
            <person name="Koike H."/>
            <person name="Aerts A."/>
            <person name="LaButti K."/>
            <person name="Grigoriev I.V."/>
            <person name="Baker S.E."/>
        </authorList>
    </citation>
    <scope>NUCLEOTIDE SEQUENCE [LARGE SCALE GENOMIC DNA]</scope>
    <source>
        <strain>ATCC 56765 / BCRC 32924 / NRRL 11460 / Rut C-30</strain>
    </source>
</reference>
<reference key="3">
    <citation type="journal article" date="2009" name="FEBS Lett.">
        <title>The Hypocrea jecorina (syn. Trichoderma reesei) lxr1 gene encodes a D-mannitol dehydrogenase and is not involved in L-arabinose catabolism.</title>
        <authorList>
            <person name="Metz B."/>
            <person name="de Vries R.P."/>
            <person name="Polak S."/>
            <person name="Seidl V."/>
            <person name="Seiboth B."/>
        </authorList>
    </citation>
    <scope>INDUCTION</scope>
    <scope>CATALYTIC ACTIVITY</scope>
    <scope>FUNCTION</scope>
    <scope>DISRUPTION PHENOTYPE</scope>
    <source>
        <strain>ATCC 26921 / CBS 392.92 / QM9414</strain>
    </source>
</reference>
<keyword id="KW-0119">Carbohydrate metabolism</keyword>
<keyword id="KW-0521">NADP</keyword>
<keyword id="KW-0560">Oxidoreductase</keyword>
<organism>
    <name type="scientific">Hypocrea jecorina (strain ATCC 56765 / BCRC 32924 / NRRL 11460 / Rut C-30)</name>
    <name type="common">Trichoderma reesei</name>
    <dbReference type="NCBI Taxonomy" id="1344414"/>
    <lineage>
        <taxon>Eukaryota</taxon>
        <taxon>Fungi</taxon>
        <taxon>Dikarya</taxon>
        <taxon>Ascomycota</taxon>
        <taxon>Pezizomycotina</taxon>
        <taxon>Sordariomycetes</taxon>
        <taxon>Hypocreomycetidae</taxon>
        <taxon>Hypocreales</taxon>
        <taxon>Hypocreaceae</taxon>
        <taxon>Trichoderma</taxon>
    </lineage>
</organism>
<feature type="chain" id="PRO_0000054558" description="NADP-dependent mannitol dehydrogenase">
    <location>
        <begin position="1"/>
        <end position="266"/>
    </location>
</feature>
<feature type="active site" description="Proton donor" evidence="2">
    <location>
        <position position="159"/>
    </location>
</feature>
<feature type="active site" description="Proton acceptor" evidence="2">
    <location>
        <position position="174"/>
    </location>
</feature>
<feature type="active site" description="Lowers pKa of active site Tyr" evidence="2">
    <location>
        <position position="178"/>
    </location>
</feature>
<feature type="binding site" evidence="1">
    <location>
        <position position="53"/>
    </location>
    <ligand>
        <name>NADP(+)</name>
        <dbReference type="ChEBI" id="CHEBI:58349"/>
    </ligand>
</feature>
<feature type="binding site" evidence="2">
    <location>
        <position position="107"/>
    </location>
    <ligand>
        <name>NADP(+)</name>
        <dbReference type="ChEBI" id="CHEBI:58349"/>
    </ligand>
</feature>
<feature type="binding site" evidence="1">
    <location>
        <position position="140"/>
    </location>
    <ligand>
        <name>NADP(+)</name>
        <dbReference type="ChEBI" id="CHEBI:58349"/>
    </ligand>
</feature>
<feature type="binding site" evidence="2">
    <location>
        <position position="174"/>
    </location>
    <ligand>
        <name>NADP(+)</name>
        <dbReference type="ChEBI" id="CHEBI:58349"/>
    </ligand>
</feature>
<feature type="binding site" evidence="2">
    <location>
        <position position="178"/>
    </location>
    <ligand>
        <name>NADP(+)</name>
        <dbReference type="ChEBI" id="CHEBI:58349"/>
    </ligand>
</feature>
<feature type="binding site" evidence="2">
    <location>
        <position position="206"/>
    </location>
    <ligand>
        <name>NADP(+)</name>
        <dbReference type="ChEBI" id="CHEBI:58349"/>
    </ligand>
</feature>
<feature type="binding site" evidence="1">
    <location>
        <position position="208"/>
    </location>
    <ligand>
        <name>NADP(+)</name>
        <dbReference type="ChEBI" id="CHEBI:58349"/>
    </ligand>
</feature>
<protein>
    <recommendedName>
        <fullName evidence="8">NADP-dependent mannitol dehydrogenase</fullName>
        <shortName evidence="8">MtDH</shortName>
        <ecNumber evidence="4">1.1.1.138</ecNumber>
    </recommendedName>
    <alternativeName>
        <fullName evidence="6">Mannitol 2-dehydrogenase [NADP(+)]</fullName>
    </alternativeName>
</protein>
<accession>Q8NK50</accession>
<accession>A0A024SLA4</accession>
<comment type="function">
    <text evidence="4">D-mannitol 2-dehydrogenase which is not necessary for D-mannitol catabolism. D-mannitol metabolism occurs via at least two different routes involving mannitol dehydrogenase (MDH) or mannitol 1-phosphate dehydrogenase, and the exact physiological role of mannitol dehydrogenases remains unclear.</text>
</comment>
<comment type="catalytic activity">
    <reaction evidence="4">
        <text>D-mannitol + NADP(+) = D-fructose + NADPH + H(+)</text>
        <dbReference type="Rhea" id="RHEA:16765"/>
        <dbReference type="ChEBI" id="CHEBI:15378"/>
        <dbReference type="ChEBI" id="CHEBI:16899"/>
        <dbReference type="ChEBI" id="CHEBI:37721"/>
        <dbReference type="ChEBI" id="CHEBI:57783"/>
        <dbReference type="ChEBI" id="CHEBI:58349"/>
        <dbReference type="EC" id="1.1.1.138"/>
    </reaction>
</comment>
<comment type="subunit">
    <text evidence="2">Homotetramer.</text>
</comment>
<comment type="induction">
    <text evidence="4">Exhibits low expression levels on L-arabinose and L-arabitol, as well as on D-mannitol. Transcript levels are shortly up-regulated during the initial stages of germination.</text>
</comment>
<comment type="disruption phenotype">
    <text evidence="4">Does not affect growth on L-arabinose and L-xylulose reductase activity remains unaltered whereas D-mannitol 2-dehydrogenase activity is reduced. Deletion does neither affect the germination process nor the hyphal morphology. Only during later stages mannitol levels are slightly lower.</text>
</comment>
<comment type="similarity">
    <text evidence="8">Belongs to the short-chain dehydrogenases/reductases (SDR) family.</text>
</comment>
<comment type="caution">
    <text evidence="3 4">Was previously described as the first fungal L-xylulose reductase responsible for NADPH dependent reduction of L-xylulose to xylitol in L-arabinose catabolism (PubMed:12009906). However, lxr1 forms a clade with fungal D-mannitol 2-dehydrogenases, is not induced by L-arabinose, and deletion reduces D-mannitol 2-dehydrogenase activity, suggesting that lxr1 is a D-mannitol 2-dehydrogenase and that a true L-xylulose reductase is still awaiting discovery (PubMed:19303876).</text>
</comment>
<gene>
    <name evidence="5" type="primary">lxr1</name>
    <name evidence="7" type="ORF">M419DRAFT_121678</name>
</gene>
<sequence>MPQPVPTANRLLDLFSLKGKVVVVTGASGPRGMGIEAARGCAEMGADLAITYSSRKEGAEKNAEELTKEYGVKVKVYKVNQSDYNDVERFVNQVVSDFGKIDAFIANAGATANSGVVDGSASDWDHVIQVDLSGTAYCAKAVGAHFKKQGHGSLVITASMSGHVANYPQEQTSYNVAKAGCIHLARSLANEWRDFARVNSISPGYIDTGLSDFIDEKTQELWRSMIPMGRNGDAKELKGAYVYLVSDASSYTTGADIVIDGGYTTR</sequence>
<name>NMTDH_HYPJR</name>
<dbReference type="EC" id="1.1.1.138" evidence="4"/>
<dbReference type="EMBL" id="KI911139">
    <property type="protein sequence ID" value="ETS06838.1"/>
    <property type="molecule type" value="Genomic_DNA"/>
</dbReference>
<dbReference type="EMBL" id="AF375616">
    <property type="protein sequence ID" value="AAM20896.1"/>
    <property type="molecule type" value="mRNA"/>
</dbReference>
<dbReference type="SMR" id="Q8NK50"/>
<dbReference type="KEGG" id="trr:M419DRAFT_121678"/>
<dbReference type="OMA" id="GAHFKKQ"/>
<dbReference type="BioCyc" id="MetaCyc:MONOMER-13194"/>
<dbReference type="BRENDA" id="1.1.1.10">
    <property type="organism ID" value="6451"/>
</dbReference>
<dbReference type="Proteomes" id="UP000024376">
    <property type="component" value="Unassembled WGS sequence"/>
</dbReference>
<dbReference type="GO" id="GO:0050038">
    <property type="term" value="F:L-xylulose reductase (NADPH) activity"/>
    <property type="evidence" value="ECO:0000250"/>
    <property type="project" value="UniProtKB"/>
</dbReference>
<dbReference type="GO" id="GO:0050085">
    <property type="term" value="F:mannitol 2-dehydrogenase (NADP+) activity"/>
    <property type="evidence" value="ECO:0000314"/>
    <property type="project" value="UniProtKB"/>
</dbReference>
<dbReference type="GO" id="GO:0050661">
    <property type="term" value="F:NADP binding"/>
    <property type="evidence" value="ECO:0000250"/>
    <property type="project" value="UniProtKB"/>
</dbReference>
<dbReference type="GO" id="GO:0050664">
    <property type="term" value="F:oxidoreductase activity, acting on NAD(P)H, oxygen as acceptor"/>
    <property type="evidence" value="ECO:0007669"/>
    <property type="project" value="TreeGrafter"/>
</dbReference>
<dbReference type="GO" id="GO:0006006">
    <property type="term" value="P:glucose metabolic process"/>
    <property type="evidence" value="ECO:0000250"/>
    <property type="project" value="UniProtKB"/>
</dbReference>
<dbReference type="GO" id="GO:0019594">
    <property type="term" value="P:mannitol metabolic process"/>
    <property type="evidence" value="ECO:0000314"/>
    <property type="project" value="UniProtKB"/>
</dbReference>
<dbReference type="GO" id="GO:0005997">
    <property type="term" value="P:xylulose metabolic process"/>
    <property type="evidence" value="ECO:0000250"/>
    <property type="project" value="UniProtKB"/>
</dbReference>
<dbReference type="CDD" id="cd05352">
    <property type="entry name" value="MDH-like_SDR_c"/>
    <property type="match status" value="1"/>
</dbReference>
<dbReference type="FunFam" id="3.40.50.720:FF:000090">
    <property type="entry name" value="NADP-dependent mannitol dehydrogenase"/>
    <property type="match status" value="1"/>
</dbReference>
<dbReference type="Gene3D" id="3.40.50.720">
    <property type="entry name" value="NAD(P)-binding Rossmann-like Domain"/>
    <property type="match status" value="1"/>
</dbReference>
<dbReference type="InterPro" id="IPR036291">
    <property type="entry name" value="NAD(P)-bd_dom_sf"/>
</dbReference>
<dbReference type="InterPro" id="IPR002347">
    <property type="entry name" value="SDR_fam"/>
</dbReference>
<dbReference type="PANTHER" id="PTHR43008">
    <property type="entry name" value="BENZIL REDUCTASE"/>
    <property type="match status" value="1"/>
</dbReference>
<dbReference type="PANTHER" id="PTHR43008:SF3">
    <property type="entry name" value="MANNITOL DEHYDROGENASE"/>
    <property type="match status" value="1"/>
</dbReference>
<dbReference type="Pfam" id="PF13561">
    <property type="entry name" value="adh_short_C2"/>
    <property type="match status" value="1"/>
</dbReference>
<dbReference type="PRINTS" id="PR00081">
    <property type="entry name" value="GDHRDH"/>
</dbReference>
<dbReference type="SUPFAM" id="SSF51735">
    <property type="entry name" value="NAD(P)-binding Rossmann-fold domains"/>
    <property type="match status" value="1"/>
</dbReference>
<proteinExistence type="evidence at protein level"/>
<evidence type="ECO:0000250" key="1">
    <source>
        <dbReference type="UniProtKB" id="L0E2Z4"/>
    </source>
</evidence>
<evidence type="ECO:0000250" key="2">
    <source>
        <dbReference type="UniProtKB" id="O93868"/>
    </source>
</evidence>
<evidence type="ECO:0000269" key="3">
    <source>
    </source>
</evidence>
<evidence type="ECO:0000269" key="4">
    <source>
    </source>
</evidence>
<evidence type="ECO:0000303" key="5">
    <source>
    </source>
</evidence>
<evidence type="ECO:0000303" key="6">
    <source>
    </source>
</evidence>
<evidence type="ECO:0000303" key="7">
    <source ref="2"/>
</evidence>
<evidence type="ECO:0000305" key="8"/>